<gene>
    <name type="primary">lpsB</name>
    <name type="ordered locus">R01572</name>
    <name type="ORF">SMc01219</name>
</gene>
<name>LPSB_RHIME</name>
<comment type="function">
    <text evidence="1">Acts at transfer of mannose group to a 3-deoxy-D-mono octulonic acid (KDO) via an alpha-1,5 linkage.</text>
</comment>
<comment type="pathway">
    <text>Bacterial outer membrane biogenesis; LPS core biosynthesis.</text>
</comment>
<comment type="similarity">
    <text evidence="2">Belongs to the glycosyltransferase group 1 family. Glycosyltransferase 4 subfamily.</text>
</comment>
<protein>
    <recommendedName>
        <fullName>Lipopolysaccharide core biosynthesis mannosyltransferase LpsB</fullName>
        <ecNumber>2.4.-.-</ecNumber>
    </recommendedName>
</protein>
<organism>
    <name type="scientific">Rhizobium meliloti (strain 1021)</name>
    <name type="common">Ensifer meliloti</name>
    <name type="synonym">Sinorhizobium meliloti</name>
    <dbReference type="NCBI Taxonomy" id="266834"/>
    <lineage>
        <taxon>Bacteria</taxon>
        <taxon>Pseudomonadati</taxon>
        <taxon>Pseudomonadota</taxon>
        <taxon>Alphaproteobacteria</taxon>
        <taxon>Hyphomicrobiales</taxon>
        <taxon>Rhizobiaceae</taxon>
        <taxon>Sinorhizobium/Ensifer group</taxon>
        <taxon>Sinorhizobium</taxon>
    </lineage>
</organism>
<feature type="chain" id="PRO_0000080297" description="Lipopolysaccharide core biosynthesis mannosyltransferase LpsB">
    <location>
        <begin position="1"/>
        <end position="351"/>
    </location>
</feature>
<reference key="1">
    <citation type="journal article" date="2001" name="J. Bacteriol.">
        <title>Genetic characterization of a Sinorhizobium meliloti chromosomal region involved in lipopolysaccharide biosynthesis.</title>
        <authorList>
            <person name="Lagares A."/>
            <person name="Hozbor D.F."/>
            <person name="Niehaus K."/>
            <person name="Pich Otero A.J.L."/>
            <person name="Lorenzen J."/>
            <person name="Arnold W."/>
            <person name="Puehler A."/>
        </authorList>
    </citation>
    <scope>NUCLEOTIDE SEQUENCE [GENOMIC DNA]</scope>
    <source>
        <strain>RCR2011 / SU47</strain>
    </source>
</reference>
<reference key="2">
    <citation type="journal article" date="2001" name="Proc. Natl. Acad. Sci. U.S.A.">
        <title>Analysis of the chromosome sequence of the legume symbiont Sinorhizobium meliloti strain 1021.</title>
        <authorList>
            <person name="Capela D."/>
            <person name="Barloy-Hubler F."/>
            <person name="Gouzy J."/>
            <person name="Bothe G."/>
            <person name="Ampe F."/>
            <person name="Batut J."/>
            <person name="Boistard P."/>
            <person name="Becker A."/>
            <person name="Boutry M."/>
            <person name="Cadieu E."/>
            <person name="Dreano S."/>
            <person name="Gloux S."/>
            <person name="Godrie T."/>
            <person name="Goffeau A."/>
            <person name="Kahn D."/>
            <person name="Kiss E."/>
            <person name="Lelaure V."/>
            <person name="Masuy D."/>
            <person name="Pohl T."/>
            <person name="Portetelle D."/>
            <person name="Puehler A."/>
            <person name="Purnelle B."/>
            <person name="Ramsperger U."/>
            <person name="Renard C."/>
            <person name="Thebault P."/>
            <person name="Vandenbol M."/>
            <person name="Weidner S."/>
            <person name="Galibert F."/>
        </authorList>
    </citation>
    <scope>NUCLEOTIDE SEQUENCE [LARGE SCALE GENOMIC DNA]</scope>
    <source>
        <strain>1021</strain>
    </source>
</reference>
<reference key="3">
    <citation type="journal article" date="2001" name="Science">
        <title>The composite genome of the legume symbiont Sinorhizobium meliloti.</title>
        <authorList>
            <person name="Galibert F."/>
            <person name="Finan T.M."/>
            <person name="Long S.R."/>
            <person name="Puehler A."/>
            <person name="Abola P."/>
            <person name="Ampe F."/>
            <person name="Barloy-Hubler F."/>
            <person name="Barnett M.J."/>
            <person name="Becker A."/>
            <person name="Boistard P."/>
            <person name="Bothe G."/>
            <person name="Boutry M."/>
            <person name="Bowser L."/>
            <person name="Buhrmester J."/>
            <person name="Cadieu E."/>
            <person name="Capela D."/>
            <person name="Chain P."/>
            <person name="Cowie A."/>
            <person name="Davis R.W."/>
            <person name="Dreano S."/>
            <person name="Federspiel N.A."/>
            <person name="Fisher R.F."/>
            <person name="Gloux S."/>
            <person name="Godrie T."/>
            <person name="Goffeau A."/>
            <person name="Golding B."/>
            <person name="Gouzy J."/>
            <person name="Gurjal M."/>
            <person name="Hernandez-Lucas I."/>
            <person name="Hong A."/>
            <person name="Huizar L."/>
            <person name="Hyman R.W."/>
            <person name="Jones T."/>
            <person name="Kahn D."/>
            <person name="Kahn M.L."/>
            <person name="Kalman S."/>
            <person name="Keating D.H."/>
            <person name="Kiss E."/>
            <person name="Komp C."/>
            <person name="Lelaure V."/>
            <person name="Masuy D."/>
            <person name="Palm C."/>
            <person name="Peck M.C."/>
            <person name="Pohl T.M."/>
            <person name="Portetelle D."/>
            <person name="Purnelle B."/>
            <person name="Ramsperger U."/>
            <person name="Surzycki R."/>
            <person name="Thebault P."/>
            <person name="Vandenbol M."/>
            <person name="Vorhoelter F.J."/>
            <person name="Weidner S."/>
            <person name="Wells D.H."/>
            <person name="Wong K."/>
            <person name="Yeh K.-C."/>
            <person name="Batut J."/>
        </authorList>
    </citation>
    <scope>NUCLEOTIDE SEQUENCE [LARGE SCALE GENOMIC DNA]</scope>
    <source>
        <strain>1021</strain>
    </source>
</reference>
<dbReference type="EC" id="2.4.-.-"/>
<dbReference type="EMBL" id="AF193023">
    <property type="protein sequence ID" value="AAF06008.1"/>
    <property type="molecule type" value="Genomic_DNA"/>
</dbReference>
<dbReference type="EMBL" id="AL591688">
    <property type="protein sequence ID" value="CAC46151.1"/>
    <property type="molecule type" value="Genomic_DNA"/>
</dbReference>
<dbReference type="RefSeq" id="NP_385678.1">
    <property type="nucleotide sequence ID" value="NC_003047.1"/>
</dbReference>
<dbReference type="RefSeq" id="WP_010969312.1">
    <property type="nucleotide sequence ID" value="NC_003047.1"/>
</dbReference>
<dbReference type="SMR" id="Q9R9N2"/>
<dbReference type="CAZy" id="GT4">
    <property type="family name" value="Glycosyltransferase Family 4"/>
</dbReference>
<dbReference type="EnsemblBacteria" id="CAC46151">
    <property type="protein sequence ID" value="CAC46151"/>
    <property type="gene ID" value="SMc01219"/>
</dbReference>
<dbReference type="KEGG" id="sme:SMc01219"/>
<dbReference type="PATRIC" id="fig|266834.11.peg.2998"/>
<dbReference type="eggNOG" id="COG0438">
    <property type="taxonomic scope" value="Bacteria"/>
</dbReference>
<dbReference type="HOGENOM" id="CLU_009583_1_0_5"/>
<dbReference type="OrthoDB" id="5490290at2"/>
<dbReference type="UniPathway" id="UPA00958"/>
<dbReference type="PRO" id="PR:Q9R9N2"/>
<dbReference type="Proteomes" id="UP000001976">
    <property type="component" value="Chromosome"/>
</dbReference>
<dbReference type="GO" id="GO:0016757">
    <property type="term" value="F:glycosyltransferase activity"/>
    <property type="evidence" value="ECO:0007669"/>
    <property type="project" value="UniProtKB-KW"/>
</dbReference>
<dbReference type="GO" id="GO:0009244">
    <property type="term" value="P:lipopolysaccharide core region biosynthetic process"/>
    <property type="evidence" value="ECO:0007669"/>
    <property type="project" value="UniProtKB-UniPathway"/>
</dbReference>
<dbReference type="CDD" id="cd03801">
    <property type="entry name" value="GT4_PimA-like"/>
    <property type="match status" value="1"/>
</dbReference>
<dbReference type="Gene3D" id="3.40.50.2000">
    <property type="entry name" value="Glycogen Phosphorylase B"/>
    <property type="match status" value="2"/>
</dbReference>
<dbReference type="PANTHER" id="PTHR12526:SF640">
    <property type="entry name" value="COLANIC ACID BIOSYNTHESIS GLYCOSYLTRANSFERASE WCAL-RELATED"/>
    <property type="match status" value="1"/>
</dbReference>
<dbReference type="PANTHER" id="PTHR12526">
    <property type="entry name" value="GLYCOSYLTRANSFERASE"/>
    <property type="match status" value="1"/>
</dbReference>
<dbReference type="Pfam" id="PF13692">
    <property type="entry name" value="Glyco_trans_1_4"/>
    <property type="match status" value="1"/>
</dbReference>
<dbReference type="SUPFAM" id="SSF53756">
    <property type="entry name" value="UDP-Glycosyltransferase/glycogen phosphorylase"/>
    <property type="match status" value="1"/>
</dbReference>
<proteinExistence type="inferred from homology"/>
<sequence length="351" mass="38662">MVDIRDVEVIAPNFKQRLSGVTSTIIQLVPVQRALGQKIAVLGPGLPKSLPSVRFRDLIHLWKRPEGRPCRVWHARRNVEMLPAILLRDLLRMKLRIVFTSASQRRHTGWSKFLIRRMDAVIATSGRTAAYLDVPNTVILHGIDTKRFQPPFDKTEAKKALGLDPAKKFVGCFGRVRHQKGTDLFVDSMIALLPCRPDWGAIVAGRATGPHLAFESELKERVAKAGLADRILFVGEHTNIPDWYRALDLFVAPQRWEGFGLTPLEAMATGVPVVATDVGAFSELVTGGSEETGLIIAADDLKAMVDAAAAFMDDRPRLAAASANGLARTSKNFAIEQEARAIAAVYESLMR</sequence>
<accession>Q9R9N2</accession>
<keyword id="KW-0328">Glycosyltransferase</keyword>
<keyword id="KW-0448">Lipopolysaccharide biosynthesis</keyword>
<keyword id="KW-1185">Reference proteome</keyword>
<keyword id="KW-0808">Transferase</keyword>
<evidence type="ECO:0000250" key="1"/>
<evidence type="ECO:0000305" key="2"/>